<reference key="1">
    <citation type="submission" date="2006-09" db="EMBL/GenBank/DDBJ databases">
        <title>Complete sequence of chromosome 1 of Shewanella sp. ANA-3.</title>
        <authorList>
            <person name="Copeland A."/>
            <person name="Lucas S."/>
            <person name="Lapidus A."/>
            <person name="Barry K."/>
            <person name="Detter J.C."/>
            <person name="Glavina del Rio T."/>
            <person name="Hammon N."/>
            <person name="Israni S."/>
            <person name="Dalin E."/>
            <person name="Tice H."/>
            <person name="Pitluck S."/>
            <person name="Chertkov O."/>
            <person name="Brettin T."/>
            <person name="Bruce D."/>
            <person name="Han C."/>
            <person name="Tapia R."/>
            <person name="Gilna P."/>
            <person name="Schmutz J."/>
            <person name="Larimer F."/>
            <person name="Land M."/>
            <person name="Hauser L."/>
            <person name="Kyrpides N."/>
            <person name="Kim E."/>
            <person name="Newman D."/>
            <person name="Salticov C."/>
            <person name="Konstantinidis K."/>
            <person name="Klappenback J."/>
            <person name="Tiedje J."/>
            <person name="Richardson P."/>
        </authorList>
    </citation>
    <scope>NUCLEOTIDE SEQUENCE [LARGE SCALE GENOMIC DNA]</scope>
    <source>
        <strain>ANA-3</strain>
    </source>
</reference>
<keyword id="KW-0963">Cytoplasm</keyword>
<keyword id="KW-0275">Fatty acid biosynthesis</keyword>
<keyword id="KW-0276">Fatty acid metabolism</keyword>
<keyword id="KW-0444">Lipid biosynthesis</keyword>
<keyword id="KW-0443">Lipid metabolism</keyword>
<keyword id="KW-0460">Magnesium</keyword>
<keyword id="KW-0479">Metal-binding</keyword>
<keyword id="KW-0808">Transferase</keyword>
<gene>
    <name evidence="1" type="primary">acpS</name>
    <name type="ordered locus">Shewana3_3022</name>
</gene>
<name>ACPS_SHESA</name>
<sequence length="127" mass="13594">MAIVGLGTDIVEIERITAHVARSGDKLAKRVLTDAEFDIYQQHSQPSRYLAKRFAAKEAAAKALGTGIGRGVSFQHIHIGNTPDGAPTIDFTEGAQQRLALLNGVVGHISIADEKSYAIATVILESR</sequence>
<proteinExistence type="inferred from homology"/>
<feature type="chain" id="PRO_1000008496" description="Holo-[acyl-carrier-protein] synthase">
    <location>
        <begin position="1"/>
        <end position="127"/>
    </location>
</feature>
<feature type="binding site" evidence="1">
    <location>
        <position position="9"/>
    </location>
    <ligand>
        <name>Mg(2+)</name>
        <dbReference type="ChEBI" id="CHEBI:18420"/>
    </ligand>
</feature>
<feature type="binding site" evidence="1">
    <location>
        <position position="58"/>
    </location>
    <ligand>
        <name>Mg(2+)</name>
        <dbReference type="ChEBI" id="CHEBI:18420"/>
    </ligand>
</feature>
<protein>
    <recommendedName>
        <fullName evidence="1">Holo-[acyl-carrier-protein] synthase</fullName>
        <shortName evidence="1">Holo-ACP synthase</shortName>
        <ecNumber evidence="1">2.7.8.7</ecNumber>
    </recommendedName>
    <alternativeName>
        <fullName evidence="1">4'-phosphopantetheinyl transferase AcpS</fullName>
    </alternativeName>
</protein>
<accession>A0KZM8</accession>
<comment type="function">
    <text evidence="1">Transfers the 4'-phosphopantetheine moiety from coenzyme A to a Ser of acyl-carrier-protein.</text>
</comment>
<comment type="catalytic activity">
    <reaction evidence="1">
        <text>apo-[ACP] + CoA = holo-[ACP] + adenosine 3',5'-bisphosphate + H(+)</text>
        <dbReference type="Rhea" id="RHEA:12068"/>
        <dbReference type="Rhea" id="RHEA-COMP:9685"/>
        <dbReference type="Rhea" id="RHEA-COMP:9690"/>
        <dbReference type="ChEBI" id="CHEBI:15378"/>
        <dbReference type="ChEBI" id="CHEBI:29999"/>
        <dbReference type="ChEBI" id="CHEBI:57287"/>
        <dbReference type="ChEBI" id="CHEBI:58343"/>
        <dbReference type="ChEBI" id="CHEBI:64479"/>
        <dbReference type="EC" id="2.7.8.7"/>
    </reaction>
</comment>
<comment type="cofactor">
    <cofactor evidence="1">
        <name>Mg(2+)</name>
        <dbReference type="ChEBI" id="CHEBI:18420"/>
    </cofactor>
</comment>
<comment type="subcellular location">
    <subcellularLocation>
        <location evidence="1">Cytoplasm</location>
    </subcellularLocation>
</comment>
<comment type="similarity">
    <text evidence="1">Belongs to the P-Pant transferase superfamily. AcpS family.</text>
</comment>
<organism>
    <name type="scientific">Shewanella sp. (strain ANA-3)</name>
    <dbReference type="NCBI Taxonomy" id="94122"/>
    <lineage>
        <taxon>Bacteria</taxon>
        <taxon>Pseudomonadati</taxon>
        <taxon>Pseudomonadota</taxon>
        <taxon>Gammaproteobacteria</taxon>
        <taxon>Alteromonadales</taxon>
        <taxon>Shewanellaceae</taxon>
        <taxon>Shewanella</taxon>
    </lineage>
</organism>
<dbReference type="EC" id="2.7.8.7" evidence="1"/>
<dbReference type="EMBL" id="CP000469">
    <property type="protein sequence ID" value="ABK49247.1"/>
    <property type="molecule type" value="Genomic_DNA"/>
</dbReference>
<dbReference type="RefSeq" id="WP_011717869.1">
    <property type="nucleotide sequence ID" value="NC_008577.1"/>
</dbReference>
<dbReference type="SMR" id="A0KZM8"/>
<dbReference type="STRING" id="94122.Shewana3_3022"/>
<dbReference type="KEGG" id="shn:Shewana3_3022"/>
<dbReference type="eggNOG" id="COG0736">
    <property type="taxonomic scope" value="Bacteria"/>
</dbReference>
<dbReference type="HOGENOM" id="CLU_089696_3_1_6"/>
<dbReference type="OrthoDB" id="517356at2"/>
<dbReference type="Proteomes" id="UP000002589">
    <property type="component" value="Chromosome"/>
</dbReference>
<dbReference type="GO" id="GO:0005737">
    <property type="term" value="C:cytoplasm"/>
    <property type="evidence" value="ECO:0007669"/>
    <property type="project" value="UniProtKB-SubCell"/>
</dbReference>
<dbReference type="GO" id="GO:0008897">
    <property type="term" value="F:holo-[acyl-carrier-protein] synthase activity"/>
    <property type="evidence" value="ECO:0007669"/>
    <property type="project" value="UniProtKB-UniRule"/>
</dbReference>
<dbReference type="GO" id="GO:0000287">
    <property type="term" value="F:magnesium ion binding"/>
    <property type="evidence" value="ECO:0007669"/>
    <property type="project" value="UniProtKB-UniRule"/>
</dbReference>
<dbReference type="GO" id="GO:0006633">
    <property type="term" value="P:fatty acid biosynthetic process"/>
    <property type="evidence" value="ECO:0007669"/>
    <property type="project" value="UniProtKB-UniRule"/>
</dbReference>
<dbReference type="FunFam" id="3.90.470.20:FF:000001">
    <property type="entry name" value="Holo-[acyl-carrier-protein] synthase"/>
    <property type="match status" value="1"/>
</dbReference>
<dbReference type="Gene3D" id="3.90.470.20">
    <property type="entry name" value="4'-phosphopantetheinyl transferase domain"/>
    <property type="match status" value="1"/>
</dbReference>
<dbReference type="HAMAP" id="MF_00101">
    <property type="entry name" value="AcpS"/>
    <property type="match status" value="1"/>
</dbReference>
<dbReference type="InterPro" id="IPR008278">
    <property type="entry name" value="4-PPantetheinyl_Trfase_dom"/>
</dbReference>
<dbReference type="InterPro" id="IPR037143">
    <property type="entry name" value="4-PPantetheinyl_Trfase_dom_sf"/>
</dbReference>
<dbReference type="InterPro" id="IPR002582">
    <property type="entry name" value="ACPS"/>
</dbReference>
<dbReference type="InterPro" id="IPR004568">
    <property type="entry name" value="Ppantetheine-prot_Trfase_dom"/>
</dbReference>
<dbReference type="NCBIfam" id="TIGR00516">
    <property type="entry name" value="acpS"/>
    <property type="match status" value="1"/>
</dbReference>
<dbReference type="NCBIfam" id="TIGR00556">
    <property type="entry name" value="pantethn_trn"/>
    <property type="match status" value="1"/>
</dbReference>
<dbReference type="Pfam" id="PF01648">
    <property type="entry name" value="ACPS"/>
    <property type="match status" value="1"/>
</dbReference>
<dbReference type="SUPFAM" id="SSF56214">
    <property type="entry name" value="4'-phosphopantetheinyl transferase"/>
    <property type="match status" value="1"/>
</dbReference>
<evidence type="ECO:0000255" key="1">
    <source>
        <dbReference type="HAMAP-Rule" id="MF_00101"/>
    </source>
</evidence>